<organism>
    <name type="scientific">Homo sapiens</name>
    <name type="common">Human</name>
    <dbReference type="NCBI Taxonomy" id="9606"/>
    <lineage>
        <taxon>Eukaryota</taxon>
        <taxon>Metazoa</taxon>
        <taxon>Chordata</taxon>
        <taxon>Craniata</taxon>
        <taxon>Vertebrata</taxon>
        <taxon>Euteleostomi</taxon>
        <taxon>Mammalia</taxon>
        <taxon>Eutheria</taxon>
        <taxon>Euarchontoglires</taxon>
        <taxon>Primates</taxon>
        <taxon>Haplorrhini</taxon>
        <taxon>Catarrhini</taxon>
        <taxon>Hominidae</taxon>
        <taxon>Homo</taxon>
    </lineage>
</organism>
<reference key="1">
    <citation type="journal article" date="2002" name="Gene">
        <title>Identification and characterization of novel mouse and human ADAM33s with potential metalloprotease activity.</title>
        <authorList>
            <person name="Yoshinaka T."/>
            <person name="Nishii K."/>
            <person name="Yamada K."/>
            <person name="Sawada H."/>
            <person name="Nishiwaki E."/>
            <person name="Smith K."/>
            <person name="Yoshino K."/>
            <person name="Ishiguro H."/>
            <person name="Higashiyama S."/>
        </authorList>
    </citation>
    <scope>NUCLEOTIDE SEQUENCE [MRNA] (ISOFORMS 1 AND 2)</scope>
    <scope>TISSUE SPECIFICITY</scope>
    <source>
        <tissue>Testis</tissue>
    </source>
</reference>
<reference key="2">
    <citation type="journal article" date="2002" name="Nature">
        <title>Association of the ADAM33 gene with asthma and bronchial hyperresponsiveness.</title>
        <authorList>
            <person name="Van Eerdewegh P."/>
            <person name="Little R.D."/>
            <person name="Dupuis J."/>
            <person name="Del Mastro R.G."/>
            <person name="Falls K."/>
            <person name="Simon J."/>
            <person name="Torrey D."/>
            <person name="Pandit S."/>
            <person name="McKenny J."/>
            <person name="Braunschweiger K."/>
            <person name="Walsh A."/>
            <person name="Liu Z."/>
            <person name="Hayward B."/>
            <person name="Folz C."/>
            <person name="Manning S.P."/>
            <person name="Bawa A."/>
            <person name="Saracino L."/>
            <person name="Thackston M."/>
            <person name="Benchekroun Y."/>
            <person name="Capparell N."/>
            <person name="Wang M."/>
            <person name="Adair R."/>
            <person name="Feng Y."/>
            <person name="Dubois J."/>
            <person name="FitzGerald M.G."/>
            <person name="Huang H."/>
            <person name="Gibson R."/>
            <person name="Allen K.M."/>
            <person name="Pedan A."/>
            <person name="Danzig M.R."/>
            <person name="Umland S.P."/>
            <person name="Egan R.W."/>
            <person name="Cuss F.M."/>
            <person name="Rorke S."/>
            <person name="Clough J.B."/>
            <person name="Holloway J.W."/>
            <person name="Holgate S.T."/>
            <person name="Keith T.P."/>
        </authorList>
    </citation>
    <scope>NUCLEOTIDE SEQUENCE [GENOMIC DNA / MRNA] (ISOFORM 1)</scope>
    <scope>INVOLVEMENT IN ASTHMA</scope>
    <source>
        <tissue>Uterus</tissue>
    </source>
</reference>
<reference key="3">
    <citation type="journal article" date="2003" name="Genome Res.">
        <title>The secreted protein discovery initiative (SPDI), a large-scale effort to identify novel human secreted and transmembrane proteins: a bioinformatics assessment.</title>
        <authorList>
            <person name="Clark H.F."/>
            <person name="Gurney A.L."/>
            <person name="Abaya E."/>
            <person name="Baker K."/>
            <person name="Baldwin D.T."/>
            <person name="Brush J."/>
            <person name="Chen J."/>
            <person name="Chow B."/>
            <person name="Chui C."/>
            <person name="Crowley C."/>
            <person name="Currell B."/>
            <person name="Deuel B."/>
            <person name="Dowd P."/>
            <person name="Eaton D."/>
            <person name="Foster J.S."/>
            <person name="Grimaldi C."/>
            <person name="Gu Q."/>
            <person name="Hass P.E."/>
            <person name="Heldens S."/>
            <person name="Huang A."/>
            <person name="Kim H.S."/>
            <person name="Klimowski L."/>
            <person name="Jin Y."/>
            <person name="Johnson S."/>
            <person name="Lee J."/>
            <person name="Lewis L."/>
            <person name="Liao D."/>
            <person name="Mark M.R."/>
            <person name="Robbie E."/>
            <person name="Sanchez C."/>
            <person name="Schoenfeld J."/>
            <person name="Seshagiri S."/>
            <person name="Simmons L."/>
            <person name="Singh J."/>
            <person name="Smith V."/>
            <person name="Stinson J."/>
            <person name="Vagts A."/>
            <person name="Vandlen R.L."/>
            <person name="Watanabe C."/>
            <person name="Wieand D."/>
            <person name="Woods K."/>
            <person name="Xie M.-H."/>
            <person name="Yansura D.G."/>
            <person name="Yi S."/>
            <person name="Yu G."/>
            <person name="Yuan J."/>
            <person name="Zhang M."/>
            <person name="Zhang Z."/>
            <person name="Goddard A.D."/>
            <person name="Wood W.I."/>
            <person name="Godowski P.J."/>
            <person name="Gray A.M."/>
        </authorList>
    </citation>
    <scope>NUCLEOTIDE SEQUENCE [LARGE SCALE MRNA] (ISOFORM 1)</scope>
</reference>
<reference key="4">
    <citation type="submission" date="2006-09" db="EMBL/GenBank/DDBJ databases">
        <authorList>
            <consortium name="NIEHS SNPs program"/>
        </authorList>
    </citation>
    <scope>NUCLEOTIDE SEQUENCE [GENOMIC DNA]</scope>
    <scope>VARIANTS SER-109; ALA-178; MET-272; ILE-316; SER-336; SER-365; GLU-441; ARG-515; HIS-612; ILE-710; GLY-739; TYR-742; THR-764 AND SER-774</scope>
</reference>
<reference key="5">
    <citation type="journal article" date="2001" name="Nature">
        <title>The DNA sequence and comparative analysis of human chromosome 20.</title>
        <authorList>
            <person name="Deloukas P."/>
            <person name="Matthews L.H."/>
            <person name="Ashurst J.L."/>
            <person name="Burton J."/>
            <person name="Gilbert J.G.R."/>
            <person name="Jones M."/>
            <person name="Stavrides G."/>
            <person name="Almeida J.P."/>
            <person name="Babbage A.K."/>
            <person name="Bagguley C.L."/>
            <person name="Bailey J."/>
            <person name="Barlow K.F."/>
            <person name="Bates K.N."/>
            <person name="Beard L.M."/>
            <person name="Beare D.M."/>
            <person name="Beasley O.P."/>
            <person name="Bird C.P."/>
            <person name="Blakey S.E."/>
            <person name="Bridgeman A.M."/>
            <person name="Brown A.J."/>
            <person name="Buck D."/>
            <person name="Burrill W.D."/>
            <person name="Butler A.P."/>
            <person name="Carder C."/>
            <person name="Carter N.P."/>
            <person name="Chapman J.C."/>
            <person name="Clamp M."/>
            <person name="Clark G."/>
            <person name="Clark L.N."/>
            <person name="Clark S.Y."/>
            <person name="Clee C.M."/>
            <person name="Clegg S."/>
            <person name="Cobley V.E."/>
            <person name="Collier R.E."/>
            <person name="Connor R.E."/>
            <person name="Corby N.R."/>
            <person name="Coulson A."/>
            <person name="Coville G.J."/>
            <person name="Deadman R."/>
            <person name="Dhami P.D."/>
            <person name="Dunn M."/>
            <person name="Ellington A.G."/>
            <person name="Frankland J.A."/>
            <person name="Fraser A."/>
            <person name="French L."/>
            <person name="Garner P."/>
            <person name="Grafham D.V."/>
            <person name="Griffiths C."/>
            <person name="Griffiths M.N.D."/>
            <person name="Gwilliam R."/>
            <person name="Hall R.E."/>
            <person name="Hammond S."/>
            <person name="Harley J.L."/>
            <person name="Heath P.D."/>
            <person name="Ho S."/>
            <person name="Holden J.L."/>
            <person name="Howden P.J."/>
            <person name="Huckle E."/>
            <person name="Hunt A.R."/>
            <person name="Hunt S.E."/>
            <person name="Jekosch K."/>
            <person name="Johnson C.M."/>
            <person name="Johnson D."/>
            <person name="Kay M.P."/>
            <person name="Kimberley A.M."/>
            <person name="King A."/>
            <person name="Knights A."/>
            <person name="Laird G.K."/>
            <person name="Lawlor S."/>
            <person name="Lehvaeslaiho M.H."/>
            <person name="Leversha M.A."/>
            <person name="Lloyd C."/>
            <person name="Lloyd D.M."/>
            <person name="Lovell J.D."/>
            <person name="Marsh V.L."/>
            <person name="Martin S.L."/>
            <person name="McConnachie L.J."/>
            <person name="McLay K."/>
            <person name="McMurray A.A."/>
            <person name="Milne S.A."/>
            <person name="Mistry D."/>
            <person name="Moore M.J.F."/>
            <person name="Mullikin J.C."/>
            <person name="Nickerson T."/>
            <person name="Oliver K."/>
            <person name="Parker A."/>
            <person name="Patel R."/>
            <person name="Pearce T.A.V."/>
            <person name="Peck A.I."/>
            <person name="Phillimore B.J.C.T."/>
            <person name="Prathalingam S.R."/>
            <person name="Plumb R.W."/>
            <person name="Ramsay H."/>
            <person name="Rice C.M."/>
            <person name="Ross M.T."/>
            <person name="Scott C.E."/>
            <person name="Sehra H.K."/>
            <person name="Shownkeen R."/>
            <person name="Sims S."/>
            <person name="Skuce C.D."/>
            <person name="Smith M.L."/>
            <person name="Soderlund C."/>
            <person name="Steward C.A."/>
            <person name="Sulston J.E."/>
            <person name="Swann R.M."/>
            <person name="Sycamore N."/>
            <person name="Taylor R."/>
            <person name="Tee L."/>
            <person name="Thomas D.W."/>
            <person name="Thorpe A."/>
            <person name="Tracey A."/>
            <person name="Tromans A.C."/>
            <person name="Vaudin M."/>
            <person name="Wall M."/>
            <person name="Wallis J.M."/>
            <person name="Whitehead S.L."/>
            <person name="Whittaker P."/>
            <person name="Willey D.L."/>
            <person name="Williams L."/>
            <person name="Williams S.A."/>
            <person name="Wilming L."/>
            <person name="Wray P.W."/>
            <person name="Hubbard T."/>
            <person name="Durbin R.M."/>
            <person name="Bentley D.R."/>
            <person name="Beck S."/>
            <person name="Rogers J."/>
        </authorList>
    </citation>
    <scope>NUCLEOTIDE SEQUENCE [LARGE SCALE GENOMIC DNA]</scope>
</reference>
<reference key="6">
    <citation type="journal article" date="2006" name="Eur. J. Hum. Genet.">
        <title>ADAM33 haplotypes are associated with asthma in a large Australian population.</title>
        <authorList>
            <person name="Kedda M.A."/>
            <person name="Duffy D.L."/>
            <person name="Bradley B."/>
            <person name="O'Hehir R.E."/>
            <person name="Thompson P.J."/>
        </authorList>
    </citation>
    <scope>INVOLVEMENT IN SUSCEPTIBILITY TO ASTHMA</scope>
</reference>
<reference key="7">
    <citation type="journal article" date="2009" name="Thorax">
        <title>Positionally cloned asthma susceptibility gene polymorphisms and disease risk in the British 1958 Birth Cohort.</title>
        <authorList>
            <person name="Blakey J.D."/>
            <person name="Sayers I."/>
            <person name="Ring S.M."/>
            <person name="Strachan D.P."/>
            <person name="Hall I.P."/>
        </authorList>
    </citation>
    <scope>INVOLVEMENT IN SUSCEPTIBILITY TO ASTHMA</scope>
</reference>
<reference key="8">
    <citation type="journal article" date="2004" name="J. Mol. Biol.">
        <title>Crystal structure of the catalytic domain of human ADAM33.</title>
        <authorList>
            <person name="Orth P."/>
            <person name="Reichert P."/>
            <person name="Wang W."/>
            <person name="Prosise W.W."/>
            <person name="Yarosh-Tomaine T."/>
            <person name="Hammond G."/>
            <person name="Ingram R.N."/>
            <person name="Xiao L."/>
            <person name="Mirza U.A."/>
            <person name="Zou J."/>
            <person name="Strickland C."/>
            <person name="Taremi S.S."/>
            <person name="Le H.V."/>
            <person name="Madison V."/>
        </authorList>
    </citation>
    <scope>X-RAY CRYSTALLOGRAPHY (1.58 ANGSTROMS) OF 204-410 IN COMPLEX WITH METALLOPROTEASE INHIBITOR MARIMASTAT AND ZINC</scope>
    <scope>X-RAY CRYSTALLOGRAPHY (1.85 ANGSTROMS) OF 204-410</scope>
    <scope>COFACTOR</scope>
</reference>
<reference key="9">
    <citation type="journal article" date="2011" name="Hum. Mutat.">
        <title>Analysis of the disintegrin-metalloproteinases family reveals ADAM29 and ADAM7 are often mutated in melanoma.</title>
        <authorList>
            <person name="Wei X."/>
            <person name="Moncada-Pazos A."/>
            <person name="Cal S."/>
            <person name="Soria-Valles C."/>
            <person name="Gartner J."/>
            <person name="Rudloff U."/>
            <person name="Lin J.C."/>
            <person name="Rosenberg S.A."/>
            <person name="Lopez-Otin C."/>
            <person name="Samuels Y."/>
        </authorList>
    </citation>
    <scope>VARIANT VAL-305</scope>
</reference>
<protein>
    <recommendedName>
        <fullName>Disintegrin and metalloproteinase domain-containing protein 33</fullName>
        <shortName>ADAM 33</shortName>
        <ecNumber>3.4.24.-</ecNumber>
    </recommendedName>
</protein>
<evidence type="ECO:0000250" key="1"/>
<evidence type="ECO:0000255" key="2"/>
<evidence type="ECO:0000255" key="3">
    <source>
        <dbReference type="PROSITE-ProRule" id="PRU00068"/>
    </source>
</evidence>
<evidence type="ECO:0000255" key="4">
    <source>
        <dbReference type="PROSITE-ProRule" id="PRU00076"/>
    </source>
</evidence>
<evidence type="ECO:0000255" key="5">
    <source>
        <dbReference type="PROSITE-ProRule" id="PRU00276"/>
    </source>
</evidence>
<evidence type="ECO:0000255" key="6">
    <source>
        <dbReference type="PROSITE-ProRule" id="PRU10095"/>
    </source>
</evidence>
<evidence type="ECO:0000256" key="7">
    <source>
        <dbReference type="SAM" id="MobiDB-lite"/>
    </source>
</evidence>
<evidence type="ECO:0000269" key="8">
    <source>
    </source>
</evidence>
<evidence type="ECO:0000269" key="9">
    <source>
    </source>
</evidence>
<evidence type="ECO:0000269" key="10">
    <source>
    </source>
</evidence>
<evidence type="ECO:0000269" key="11">
    <source>
    </source>
</evidence>
<evidence type="ECO:0000269" key="12">
    <source>
    </source>
</evidence>
<evidence type="ECO:0000269" key="13">
    <source>
    </source>
</evidence>
<evidence type="ECO:0000269" key="14">
    <source ref="4"/>
</evidence>
<evidence type="ECO:0000303" key="15">
    <source>
    </source>
</evidence>
<evidence type="ECO:0000305" key="16"/>
<evidence type="ECO:0007829" key="17">
    <source>
        <dbReference type="PDB" id="1R55"/>
    </source>
</evidence>
<keyword id="KW-0002">3D-structure</keyword>
<keyword id="KW-0025">Alternative splicing</keyword>
<keyword id="KW-1058">Asthma</keyword>
<keyword id="KW-0165">Cleavage on pair of basic residues</keyword>
<keyword id="KW-1015">Disulfide bond</keyword>
<keyword id="KW-0245">EGF-like domain</keyword>
<keyword id="KW-0325">Glycoprotein</keyword>
<keyword id="KW-0378">Hydrolase</keyword>
<keyword id="KW-0472">Membrane</keyword>
<keyword id="KW-0479">Metal-binding</keyword>
<keyword id="KW-0482">Metalloprotease</keyword>
<keyword id="KW-0645">Protease</keyword>
<keyword id="KW-1267">Proteomics identification</keyword>
<keyword id="KW-1185">Reference proteome</keyword>
<keyword id="KW-0732">Signal</keyword>
<keyword id="KW-0812">Transmembrane</keyword>
<keyword id="KW-1133">Transmembrane helix</keyword>
<keyword id="KW-0862">Zinc</keyword>
<keyword id="KW-0865">Zymogen</keyword>
<comment type="cofactor">
    <cofactor evidence="10">
        <name>Zn(2+)</name>
        <dbReference type="ChEBI" id="CHEBI:29105"/>
    </cofactor>
    <text evidence="10">Binds 1 zinc ion per subunit.</text>
</comment>
<comment type="interaction">
    <interactant intactId="EBI-10303054">
        <id>Q9BZ11-2</id>
    </interactant>
    <interactant intactId="EBI-3939278">
        <id>Q9BXN2</id>
        <label>CLEC7A</label>
    </interactant>
    <organismsDiffer>false</organismsDiffer>
    <experiments>3</experiments>
</comment>
<comment type="interaction">
    <interactant intactId="EBI-10303054">
        <id>Q9BZ11-2</id>
    </interactant>
    <interactant intactId="EBI-8644112">
        <id>Q9BRI3</id>
        <label>SLC30A2</label>
    </interactant>
    <organismsDiffer>false</organismsDiffer>
    <experiments>3</experiments>
</comment>
<comment type="subcellular location">
    <subcellularLocation>
        <location>Membrane</location>
        <topology>Single-pass type I membrane protein</topology>
    </subcellularLocation>
</comment>
<comment type="alternative products">
    <event type="alternative splicing"/>
    <isoform>
        <id>Q9BZ11-1</id>
        <name>1</name>
        <sequence type="displayed"/>
    </isoform>
    <isoform>
        <id>Q9BZ11-2</id>
        <name>2</name>
        <sequence type="described" ref="VSP_005495"/>
    </isoform>
    <isoform>
        <id>Q9BZ11-3</id>
        <name>3</name>
        <sequence type="described" ref="VSP_015421 VSP_005495"/>
    </isoform>
</comment>
<comment type="tissue specificity">
    <text evidence="8">Expressed in all tissues, except liver, with high expression in placenta, lung, spleen and veins.</text>
</comment>
<comment type="domain">
    <text>The conserved cysteine present in the cysteine-switch motif binds the catalytic zinc ion, thus inhibiting the enzyme. The dissociation of the cysteine from the zinc ion upon the activation-peptide release activates the enzyme.</text>
</comment>
<comment type="PTM">
    <text evidence="1">The precursor is cleaved by a furin endopeptidase.</text>
</comment>
<comment type="disease" evidence="9 11 12">
    <disease id="DI-02482">
        <name>Asthma</name>
        <acronym>ASTHMA</acronym>
        <description>The most common chronic disease affecting children and young adults. It is a complex genetic disorder with a heterogeneous phenotype, largely attributed to the interactions among many genes and between these genes and the environment. It is characterized by recurrent attacks of paroxysmal dyspnea, with wheezing due to spasmodic contraction of the bronchi.</description>
        <dbReference type="MIM" id="600807"/>
    </disease>
    <text>Disease susceptibility is associated with variants affecting the gene represented in this entry.</text>
</comment>
<comment type="miscellaneous">
    <molecule>Isoform 3</molecule>
    <text evidence="16">By similarity with mouse isoform.</text>
</comment>
<name>ADA33_HUMAN</name>
<accession>Q9BZ11</accession>
<accession>A0A1K6</accession>
<accession>Q5JT75</accession>
<accession>Q5JT76</accession>
<accession>Q8N0W6</accession>
<proteinExistence type="evidence at protein level"/>
<feature type="signal peptide" evidence="2">
    <location>
        <begin position="1"/>
        <end position="29"/>
    </location>
</feature>
<feature type="propeptide" id="PRO_0000029142" evidence="1">
    <location>
        <begin position="30"/>
        <end position="203"/>
    </location>
</feature>
<feature type="chain" id="PRO_0000029143" description="Disintegrin and metalloproteinase domain-containing protein 33">
    <location>
        <begin position="204"/>
        <end position="813"/>
    </location>
</feature>
<feature type="topological domain" description="Extracellular" evidence="2">
    <location>
        <begin position="30"/>
        <end position="701"/>
    </location>
</feature>
<feature type="transmembrane region" description="Helical" evidence="2">
    <location>
        <begin position="702"/>
        <end position="722"/>
    </location>
</feature>
<feature type="topological domain" description="Cytoplasmic" evidence="2">
    <location>
        <begin position="723"/>
        <end position="813"/>
    </location>
</feature>
<feature type="domain" description="Peptidase M12B" evidence="5">
    <location>
        <begin position="210"/>
        <end position="409"/>
    </location>
</feature>
<feature type="domain" description="Disintegrin" evidence="3">
    <location>
        <begin position="417"/>
        <end position="503"/>
    </location>
</feature>
<feature type="domain" description="EGF-like" evidence="4">
    <location>
        <begin position="649"/>
        <end position="681"/>
    </location>
</feature>
<feature type="region of interest" description="Disordered" evidence="7">
    <location>
        <begin position="184"/>
        <end position="205"/>
    </location>
</feature>
<feature type="region of interest" description="Disordered" evidence="7">
    <location>
        <begin position="746"/>
        <end position="813"/>
    </location>
</feature>
<feature type="short sequence motif" description="Cysteine switch" evidence="1">
    <location>
        <begin position="131"/>
        <end position="138"/>
    </location>
</feature>
<feature type="compositionally biased region" description="Basic and acidic residues" evidence="7">
    <location>
        <begin position="780"/>
        <end position="791"/>
    </location>
</feature>
<feature type="active site" evidence="5 6">
    <location>
        <position position="346"/>
    </location>
</feature>
<feature type="binding site" description="in inhibited form" evidence="1">
    <location>
        <position position="133"/>
    </location>
    <ligand>
        <name>Zn(2+)</name>
        <dbReference type="ChEBI" id="CHEBI:29105"/>
        <note>catalytic</note>
    </ligand>
</feature>
<feature type="binding site" evidence="10">
    <location>
        <position position="345"/>
    </location>
    <ligand>
        <name>Zn(2+)</name>
        <dbReference type="ChEBI" id="CHEBI:29105"/>
        <note>catalytic</note>
    </ligand>
</feature>
<feature type="binding site" evidence="10">
    <location>
        <position position="349"/>
    </location>
    <ligand>
        <name>Zn(2+)</name>
        <dbReference type="ChEBI" id="CHEBI:29105"/>
        <note>catalytic</note>
    </ligand>
</feature>
<feature type="binding site" evidence="10">
    <location>
        <position position="355"/>
    </location>
    <ligand>
        <name>Zn(2+)</name>
        <dbReference type="ChEBI" id="CHEBI:29105"/>
        <note>catalytic</note>
    </ligand>
</feature>
<feature type="glycosylation site" description="N-linked (GlcNAc...) asparagine" evidence="2">
    <location>
        <position position="109"/>
    </location>
</feature>
<feature type="glycosylation site" description="N-linked (GlcNAc...) asparagine" evidence="2">
    <location>
        <position position="145"/>
    </location>
</feature>
<feature type="glycosylation site" description="N-linked (GlcNAc...) asparagine">
    <location>
        <position position="231"/>
    </location>
</feature>
<feature type="glycosylation site" description="N-linked (GlcNAc...) asparagine">
    <location>
        <position position="276"/>
    </location>
</feature>
<feature type="glycosylation site" description="N-linked (GlcNAc...) asparagine" evidence="2">
    <location>
        <position position="448"/>
    </location>
</feature>
<feature type="disulfide bond" evidence="10">
    <location>
        <begin position="320"/>
        <end position="404"/>
    </location>
</feature>
<feature type="disulfide bond" evidence="10">
    <location>
        <begin position="360"/>
        <end position="388"/>
    </location>
</feature>
<feature type="disulfide bond" evidence="10">
    <location>
        <begin position="361"/>
        <end position="371"/>
    </location>
</feature>
<feature type="disulfide bond" evidence="1">
    <location>
        <begin position="475"/>
        <end position="495"/>
    </location>
</feature>
<feature type="disulfide bond" evidence="1">
    <location>
        <begin position="653"/>
        <end position="663"/>
    </location>
</feature>
<feature type="disulfide bond" evidence="1">
    <location>
        <begin position="657"/>
        <end position="669"/>
    </location>
</feature>
<feature type="disulfide bond" evidence="1">
    <location>
        <begin position="671"/>
        <end position="680"/>
    </location>
</feature>
<feature type="splice variant" id="VSP_015421" description="In isoform 3." evidence="16">
    <location>
        <begin position="1"/>
        <end position="478"/>
    </location>
</feature>
<feature type="splice variant" id="VSP_005495" description="In isoform 2 and isoform 3." evidence="15">
    <location>
        <begin position="636"/>
        <end position="661"/>
    </location>
</feature>
<feature type="sequence variant" id="VAR_030512" description="In dbSNP:rs41467948." evidence="14">
    <original>N</original>
    <variation>S</variation>
    <location>
        <position position="109"/>
    </location>
</feature>
<feature type="sequence variant" id="VAR_029143" description="In dbSNP:rs3918392." evidence="14">
    <original>T</original>
    <variation>A</variation>
    <location>
        <position position="178"/>
    </location>
</feature>
<feature type="sequence variant" id="VAR_030513" description="In dbSNP:rs41534847." evidence="14">
    <original>T</original>
    <variation>M</variation>
    <location>
        <position position="272"/>
    </location>
</feature>
<feature type="sequence variant" id="VAR_066337" description="In a cutaneous metastatic melanoma sample; somatic mutation; dbSNP:rs1169229302." evidence="13">
    <original>A</original>
    <variation>V</variation>
    <location>
        <position position="305"/>
    </location>
</feature>
<feature type="sequence variant" id="VAR_030514" description="In dbSNP:rs41459049." evidence="14">
    <original>V</original>
    <variation>I</variation>
    <location>
        <position position="316"/>
    </location>
</feature>
<feature type="sequence variant" id="VAR_030515" description="In dbSNP:rs41483049." evidence="14">
    <original>P</original>
    <variation>S</variation>
    <location>
        <position position="336"/>
    </location>
</feature>
<feature type="sequence variant" id="VAR_030516" description="In dbSNP:rs41419248." evidence="14">
    <original>A</original>
    <variation>S</variation>
    <location>
        <position position="365"/>
    </location>
</feature>
<feature type="sequence variant" id="VAR_030517" description="In dbSNP:rs41382144." evidence="14">
    <original>D</original>
    <variation>E</variation>
    <location>
        <position position="441"/>
    </location>
</feature>
<feature type="sequence variant" id="VAR_030518" description="In dbSNP:rs615436." evidence="14">
    <original>W</original>
    <variation>R</variation>
    <location>
        <position position="515"/>
    </location>
</feature>
<feature type="sequence variant" id="VAR_030519" description="In dbSNP:rs41453444." evidence="14">
    <original>L</original>
    <variation>H</variation>
    <location>
        <position position="612"/>
    </location>
</feature>
<feature type="sequence variant" id="VAR_030520" description="In dbSNP:rs3918396." evidence="14">
    <original>V</original>
    <variation>I</variation>
    <location>
        <position position="710"/>
    </location>
</feature>
<feature type="sequence variant" id="VAR_030521" description="In dbSNP:rs41434648." evidence="14">
    <original>C</original>
    <variation>G</variation>
    <location>
        <position position="739"/>
    </location>
</feature>
<feature type="sequence variant" id="VAR_030522" description="In dbSNP:rs41462450." evidence="14">
    <original>D</original>
    <variation>Y</variation>
    <location>
        <position position="742"/>
    </location>
</feature>
<feature type="sequence variant" id="VAR_021847" description="In dbSNP:rs2280091." evidence="14">
    <original>M</original>
    <variation>T</variation>
    <location>
        <position position="764"/>
    </location>
</feature>
<feature type="sequence variant" id="VAR_029144" description="In dbSNP:rs2280090." evidence="14">
    <original>P</original>
    <variation>S</variation>
    <location>
        <position position="774"/>
    </location>
</feature>
<feature type="sequence conflict" description="In Ref. 2; AAM80482/AAM80483." evidence="16" ref="2">
    <location>
        <position position="802"/>
    </location>
</feature>
<feature type="strand" evidence="17">
    <location>
        <begin position="210"/>
        <end position="218"/>
    </location>
</feature>
<feature type="helix" evidence="17">
    <location>
        <begin position="220"/>
        <end position="225"/>
    </location>
</feature>
<feature type="turn" evidence="17">
    <location>
        <begin position="226"/>
        <end position="228"/>
    </location>
</feature>
<feature type="helix" evidence="17">
    <location>
        <begin position="230"/>
        <end position="248"/>
    </location>
</feature>
<feature type="helix" evidence="17">
    <location>
        <begin position="249"/>
        <end position="251"/>
    </location>
</feature>
<feature type="strand" evidence="17">
    <location>
        <begin position="253"/>
        <end position="262"/>
    </location>
</feature>
<feature type="strand" evidence="17">
    <location>
        <begin position="264"/>
        <end position="266"/>
    </location>
</feature>
<feature type="helix" evidence="17">
    <location>
        <begin position="275"/>
        <end position="292"/>
    </location>
</feature>
<feature type="strand" evidence="17">
    <location>
        <begin position="296"/>
        <end position="303"/>
    </location>
</feature>
<feature type="helix" evidence="17">
    <location>
        <begin position="307"/>
        <end position="309"/>
    </location>
</feature>
<feature type="turn" evidence="17">
    <location>
        <begin position="322"/>
        <end position="324"/>
    </location>
</feature>
<feature type="strand" evidence="17">
    <location>
        <begin position="326"/>
        <end position="330"/>
    </location>
</feature>
<feature type="strand" evidence="17">
    <location>
        <begin position="333"/>
        <end position="335"/>
    </location>
</feature>
<feature type="helix" evidence="17">
    <location>
        <begin position="336"/>
        <end position="350"/>
    </location>
</feature>
<feature type="helix" evidence="17">
    <location>
        <begin position="366"/>
        <end position="368"/>
    </location>
</feature>
<feature type="helix" evidence="17">
    <location>
        <begin position="387"/>
        <end position="398"/>
    </location>
</feature>
<feature type="turn" evidence="17">
    <location>
        <begin position="399"/>
        <end position="402"/>
    </location>
</feature>
<feature type="helix" evidence="17">
    <location>
        <begin position="403"/>
        <end position="406"/>
    </location>
</feature>
<gene>
    <name type="primary">ADAM33</name>
    <name type="synonym">C20orf153</name>
    <name type="ORF">UNQ873/PRO1891</name>
</gene>
<dbReference type="EC" id="3.4.24.-"/>
<dbReference type="EMBL" id="AB055891">
    <property type="protein sequence ID" value="BAB83092.1"/>
    <property type="molecule type" value="mRNA"/>
</dbReference>
<dbReference type="EMBL" id="AF466287">
    <property type="protein sequence ID" value="AAM80482.1"/>
    <property type="molecule type" value="mRNA"/>
</dbReference>
<dbReference type="EMBL" id="AF466288">
    <property type="protein sequence ID" value="AAM80483.1"/>
    <property type="molecule type" value="Genomic_DNA"/>
</dbReference>
<dbReference type="EMBL" id="AY358314">
    <property type="protein sequence ID" value="AAQ88680.1"/>
    <property type="molecule type" value="mRNA"/>
</dbReference>
<dbReference type="EMBL" id="DQ995342">
    <property type="protein sequence ID" value="ABI97387.1"/>
    <property type="molecule type" value="Genomic_DNA"/>
</dbReference>
<dbReference type="EMBL" id="AL109804">
    <property type="status" value="NOT_ANNOTATED_CDS"/>
    <property type="molecule type" value="Genomic_DNA"/>
</dbReference>
<dbReference type="EMBL" id="AL356755">
    <property type="status" value="NOT_ANNOTATED_CDS"/>
    <property type="molecule type" value="Genomic_DNA"/>
</dbReference>
<dbReference type="CCDS" id="CCDS13058.1">
    <molecule id="Q9BZ11-1"/>
</dbReference>
<dbReference type="RefSeq" id="NP_001269376.1">
    <property type="nucleotide sequence ID" value="NM_001282447.2"/>
</dbReference>
<dbReference type="RefSeq" id="NP_079496.1">
    <molecule id="Q9BZ11-1"/>
    <property type="nucleotide sequence ID" value="NM_025220.5"/>
</dbReference>
<dbReference type="RefSeq" id="NP_694882.1">
    <molecule id="Q9BZ11-2"/>
    <property type="nucleotide sequence ID" value="NM_153202.4"/>
</dbReference>
<dbReference type="PDB" id="1R54">
    <property type="method" value="X-ray"/>
    <property type="resolution" value="1.85 A"/>
    <property type="chains" value="A=204-409"/>
</dbReference>
<dbReference type="PDB" id="1R55">
    <property type="method" value="X-ray"/>
    <property type="resolution" value="1.58 A"/>
    <property type="chains" value="A=204-409"/>
</dbReference>
<dbReference type="PDBsum" id="1R54"/>
<dbReference type="PDBsum" id="1R55"/>
<dbReference type="SMR" id="Q9BZ11"/>
<dbReference type="BioGRID" id="123243">
    <property type="interactions" value="94"/>
</dbReference>
<dbReference type="FunCoup" id="Q9BZ11">
    <property type="interactions" value="107"/>
</dbReference>
<dbReference type="IntAct" id="Q9BZ11">
    <property type="interactions" value="48"/>
</dbReference>
<dbReference type="STRING" id="9606.ENSP00000348912"/>
<dbReference type="BindingDB" id="Q9BZ11"/>
<dbReference type="ChEMBL" id="CHEMBL6121"/>
<dbReference type="DrugBank" id="DB07145">
    <property type="generic name" value="(2R)-N-HYDROXY-2-[(3S)-3-METHYL-3-{4-[(2-METHYLQUINOLIN-4-YL)METHOXY]PHENYL}-2-OXOPYRROLIDIN-1-YL]PROPANAMIDE"/>
</dbReference>
<dbReference type="GuidetoPHARMACOLOGY" id="1673"/>
<dbReference type="MEROPS" id="M12.244"/>
<dbReference type="GlyCosmos" id="Q9BZ11">
    <property type="glycosylation" value="5 sites, No reported glycans"/>
</dbReference>
<dbReference type="GlyGen" id="Q9BZ11">
    <property type="glycosylation" value="5 sites"/>
</dbReference>
<dbReference type="iPTMnet" id="Q9BZ11"/>
<dbReference type="PhosphoSitePlus" id="Q9BZ11"/>
<dbReference type="BioMuta" id="ADAM33"/>
<dbReference type="DMDM" id="20137458"/>
<dbReference type="jPOST" id="Q9BZ11"/>
<dbReference type="MassIVE" id="Q9BZ11"/>
<dbReference type="PaxDb" id="9606-ENSP00000348912"/>
<dbReference type="PeptideAtlas" id="Q9BZ11"/>
<dbReference type="ProteomicsDB" id="79748">
    <molecule id="Q9BZ11-1"/>
</dbReference>
<dbReference type="ProteomicsDB" id="79749">
    <molecule id="Q9BZ11-2"/>
</dbReference>
<dbReference type="Antibodypedia" id="7461">
    <property type="antibodies" value="189 antibodies from 33 providers"/>
</dbReference>
<dbReference type="DNASU" id="80332"/>
<dbReference type="Ensembl" id="ENST00000350009.6">
    <molecule id="Q9BZ11-2"/>
    <property type="protein sequence ID" value="ENSP00000322550.5"/>
    <property type="gene ID" value="ENSG00000149451.19"/>
</dbReference>
<dbReference type="Ensembl" id="ENST00000356518.7">
    <molecule id="Q9BZ11-1"/>
    <property type="protein sequence ID" value="ENSP00000348912.3"/>
    <property type="gene ID" value="ENSG00000149451.19"/>
</dbReference>
<dbReference type="GeneID" id="80332"/>
<dbReference type="KEGG" id="hsa:80332"/>
<dbReference type="MANE-Select" id="ENST00000356518.7">
    <property type="protein sequence ID" value="ENSP00000348912.3"/>
    <property type="RefSeq nucleotide sequence ID" value="NM_025220.5"/>
    <property type="RefSeq protein sequence ID" value="NP_079496.1"/>
</dbReference>
<dbReference type="UCSC" id="uc002wit.5">
    <molecule id="Q9BZ11-1"/>
    <property type="organism name" value="human"/>
</dbReference>
<dbReference type="AGR" id="HGNC:15478"/>
<dbReference type="CTD" id="80332"/>
<dbReference type="DisGeNET" id="80332"/>
<dbReference type="GeneCards" id="ADAM33"/>
<dbReference type="HGNC" id="HGNC:15478">
    <property type="gene designation" value="ADAM33"/>
</dbReference>
<dbReference type="HPA" id="ENSG00000149451">
    <property type="expression patterns" value="Tissue enhanced (cervix)"/>
</dbReference>
<dbReference type="MIM" id="600807">
    <property type="type" value="phenotype"/>
</dbReference>
<dbReference type="MIM" id="607114">
    <property type="type" value="gene"/>
</dbReference>
<dbReference type="neXtProt" id="NX_Q9BZ11"/>
<dbReference type="OpenTargets" id="ENSG00000149451"/>
<dbReference type="PharmGKB" id="PA24526"/>
<dbReference type="VEuPathDB" id="HostDB:ENSG00000149451"/>
<dbReference type="eggNOG" id="KOG3607">
    <property type="taxonomic scope" value="Eukaryota"/>
</dbReference>
<dbReference type="GeneTree" id="ENSGT00940000158971"/>
<dbReference type="HOGENOM" id="CLU_012714_7_2_1"/>
<dbReference type="InParanoid" id="Q9BZ11"/>
<dbReference type="OMA" id="MGAQCAH"/>
<dbReference type="OrthoDB" id="5951731at2759"/>
<dbReference type="PAN-GO" id="Q9BZ11">
    <property type="GO annotations" value="0 GO annotations based on evolutionary models"/>
</dbReference>
<dbReference type="PhylomeDB" id="Q9BZ11"/>
<dbReference type="TreeFam" id="TF314733"/>
<dbReference type="PathwayCommons" id="Q9BZ11"/>
<dbReference type="Reactome" id="R-HSA-9762292">
    <property type="pathway name" value="Regulation of CDH11 function"/>
</dbReference>
<dbReference type="SignaLink" id="Q9BZ11"/>
<dbReference type="BioGRID-ORCS" id="80332">
    <property type="hits" value="20 hits in 1153 CRISPR screens"/>
</dbReference>
<dbReference type="EvolutionaryTrace" id="Q9BZ11"/>
<dbReference type="GeneWiki" id="ADAM33"/>
<dbReference type="GenomeRNAi" id="80332"/>
<dbReference type="Pharos" id="Q9BZ11">
    <property type="development level" value="Tchem"/>
</dbReference>
<dbReference type="PRO" id="PR:Q9BZ11"/>
<dbReference type="Proteomes" id="UP000005640">
    <property type="component" value="Chromosome 20"/>
</dbReference>
<dbReference type="RNAct" id="Q9BZ11">
    <property type="molecule type" value="protein"/>
</dbReference>
<dbReference type="Bgee" id="ENSG00000149451">
    <property type="expression patterns" value="Expressed in endocervix and 174 other cell types or tissues"/>
</dbReference>
<dbReference type="ExpressionAtlas" id="Q9BZ11">
    <property type="expression patterns" value="baseline and differential"/>
</dbReference>
<dbReference type="GO" id="GO:0016020">
    <property type="term" value="C:membrane"/>
    <property type="evidence" value="ECO:0000303"/>
    <property type="project" value="UniProtKB"/>
</dbReference>
<dbReference type="GO" id="GO:0004222">
    <property type="term" value="F:metalloendopeptidase activity"/>
    <property type="evidence" value="ECO:0000318"/>
    <property type="project" value="GO_Central"/>
</dbReference>
<dbReference type="GO" id="GO:0008270">
    <property type="term" value="F:zinc ion binding"/>
    <property type="evidence" value="ECO:0000303"/>
    <property type="project" value="UniProtKB"/>
</dbReference>
<dbReference type="GO" id="GO:0006508">
    <property type="term" value="P:proteolysis"/>
    <property type="evidence" value="ECO:0000318"/>
    <property type="project" value="GO_Central"/>
</dbReference>
<dbReference type="CDD" id="cd04269">
    <property type="entry name" value="ZnMc_adamalysin_II_like"/>
    <property type="match status" value="1"/>
</dbReference>
<dbReference type="FunFam" id="3.40.390.10:FF:000002">
    <property type="entry name" value="Disintegrin and metalloproteinase domain-containing protein 22"/>
    <property type="match status" value="1"/>
</dbReference>
<dbReference type="FunFam" id="4.10.70.10:FF:000001">
    <property type="entry name" value="Disintegrin and metalloproteinase domain-containing protein 22"/>
    <property type="match status" value="1"/>
</dbReference>
<dbReference type="Gene3D" id="3.40.390.10">
    <property type="entry name" value="Collagenase (Catalytic Domain)"/>
    <property type="match status" value="1"/>
</dbReference>
<dbReference type="Gene3D" id="4.10.70.10">
    <property type="entry name" value="Disintegrin domain"/>
    <property type="match status" value="1"/>
</dbReference>
<dbReference type="InterPro" id="IPR006586">
    <property type="entry name" value="ADAM_Cys-rich"/>
</dbReference>
<dbReference type="InterPro" id="IPR018358">
    <property type="entry name" value="Disintegrin_CS"/>
</dbReference>
<dbReference type="InterPro" id="IPR001762">
    <property type="entry name" value="Disintegrin_dom"/>
</dbReference>
<dbReference type="InterPro" id="IPR036436">
    <property type="entry name" value="Disintegrin_dom_sf"/>
</dbReference>
<dbReference type="InterPro" id="IPR000742">
    <property type="entry name" value="EGF-like_dom"/>
</dbReference>
<dbReference type="InterPro" id="IPR024079">
    <property type="entry name" value="MetalloPept_cat_dom_sf"/>
</dbReference>
<dbReference type="InterPro" id="IPR001590">
    <property type="entry name" value="Peptidase_M12B"/>
</dbReference>
<dbReference type="InterPro" id="IPR002870">
    <property type="entry name" value="Peptidase_M12B_N"/>
</dbReference>
<dbReference type="InterPro" id="IPR034027">
    <property type="entry name" value="Reprolysin_adamalysin"/>
</dbReference>
<dbReference type="PANTHER" id="PTHR11905">
    <property type="entry name" value="ADAM A DISINTEGRIN AND METALLOPROTEASE DOMAIN"/>
    <property type="match status" value="1"/>
</dbReference>
<dbReference type="PANTHER" id="PTHR11905:SF38">
    <property type="entry name" value="DISINTEGRIN AND METALLOPROTEINASE DOMAIN-CONTAINING PROTEIN 33"/>
    <property type="match status" value="1"/>
</dbReference>
<dbReference type="Pfam" id="PF08516">
    <property type="entry name" value="ADAM_CR"/>
    <property type="match status" value="1"/>
</dbReference>
<dbReference type="Pfam" id="PF00200">
    <property type="entry name" value="Disintegrin"/>
    <property type="match status" value="1"/>
</dbReference>
<dbReference type="Pfam" id="PF01562">
    <property type="entry name" value="Pep_M12B_propep"/>
    <property type="match status" value="1"/>
</dbReference>
<dbReference type="Pfam" id="PF01421">
    <property type="entry name" value="Reprolysin"/>
    <property type="match status" value="1"/>
</dbReference>
<dbReference type="PRINTS" id="PR00289">
    <property type="entry name" value="DISINTEGRIN"/>
</dbReference>
<dbReference type="SMART" id="SM00608">
    <property type="entry name" value="ACR"/>
    <property type="match status" value="1"/>
</dbReference>
<dbReference type="SMART" id="SM00050">
    <property type="entry name" value="DISIN"/>
    <property type="match status" value="1"/>
</dbReference>
<dbReference type="SUPFAM" id="SSF57552">
    <property type="entry name" value="Blood coagulation inhibitor (disintegrin)"/>
    <property type="match status" value="1"/>
</dbReference>
<dbReference type="SUPFAM" id="SSF55486">
    <property type="entry name" value="Metalloproteases ('zincins'), catalytic domain"/>
    <property type="match status" value="1"/>
</dbReference>
<dbReference type="PROSITE" id="PS50215">
    <property type="entry name" value="ADAM_MEPRO"/>
    <property type="match status" value="1"/>
</dbReference>
<dbReference type="PROSITE" id="PS00427">
    <property type="entry name" value="DISINTEGRIN_1"/>
    <property type="match status" value="1"/>
</dbReference>
<dbReference type="PROSITE" id="PS50214">
    <property type="entry name" value="DISINTEGRIN_2"/>
    <property type="match status" value="1"/>
</dbReference>
<dbReference type="PROSITE" id="PS01186">
    <property type="entry name" value="EGF_2"/>
    <property type="match status" value="1"/>
</dbReference>
<dbReference type="PROSITE" id="PS50026">
    <property type="entry name" value="EGF_3"/>
    <property type="match status" value="1"/>
</dbReference>
<dbReference type="PROSITE" id="PS00142">
    <property type="entry name" value="ZINC_PROTEASE"/>
    <property type="match status" value="1"/>
</dbReference>
<sequence length="813" mass="87739">MGWRPRRARGTPLLLLLLLLLLWPVPGAGVLQGHIPGQPVTPHWVLDGQPWRTVSLEEPVSKPDMGLVALEAEGQELLLELEKNHRLLAPGYIETHYGPDGQPVVLAPNHTDHCHYQGRVRGFPDSWVVLCTCSGMSGLITLSRNASYYLRPWPPRGSKDFSTHEIFRMEQLLTWKGTCGHRDPGNKAGMTSLPGGPQSRGRREARRTRKYLELYIVADHTLFLTRHRNLNHTKQRLLEVANYVDQLLRTLDIQVALTGLEVWTERDRSRVTQDANATLWAFLQWRRGLWAQRPHDSAQLLTGRAFQGATVGLAPVEGMCRAESSGGVSTDHSELPIGAAATMAHEIGHSLGLSHDPDGCCVEAAAESGGCVMAAATGHPFPRVFSACSRRQLRAFFRKGGGACLSNAPDPGLPVPPALCGNGFVEAGEECDCGPGQECRDLCCFAHNCSLRPGAQCAHGDCCVRCLLKPAGALCRQAMGDCDLPEFCTGTSSHCPPDVYLLDGSPCARGSGYCWDGACPTLEQQCQQLWGPGSHPAPEACFQVVNSAGDAHGNCGQDSEGHFLPCAGRDALCGKLQCQGGKPSLLAPHMVPVDSTVHLDGQEVTCRGALALPSAQLDLLGLGLVEPGTQCGPRMVCQSRRCRKNAFQELQRCLTACHSHGVCNSNHNCHCAPGWAPPFCDKPGFGGSMDSGPVQAENHDTFLLAMLLSVLLPLLPGAGLAWCCYRLPGAHLQRCSWGCRRDPACSGPKDGPHRDHPLGGVHPMELGPTATGQPWPLDPENSHEPSSHPEKPLPAVSPDPQADQVQMPRSCLW</sequence>